<name>YE8E_SCHPO</name>
<reference key="1">
    <citation type="journal article" date="2002" name="Nature">
        <title>The genome sequence of Schizosaccharomyces pombe.</title>
        <authorList>
            <person name="Wood V."/>
            <person name="Gwilliam R."/>
            <person name="Rajandream M.A."/>
            <person name="Lyne M.H."/>
            <person name="Lyne R."/>
            <person name="Stewart A."/>
            <person name="Sgouros J.G."/>
            <person name="Peat N."/>
            <person name="Hayles J."/>
            <person name="Baker S.G."/>
            <person name="Basham D."/>
            <person name="Bowman S."/>
            <person name="Brooks K."/>
            <person name="Brown D."/>
            <person name="Brown S."/>
            <person name="Chillingworth T."/>
            <person name="Churcher C.M."/>
            <person name="Collins M."/>
            <person name="Connor R."/>
            <person name="Cronin A."/>
            <person name="Davis P."/>
            <person name="Feltwell T."/>
            <person name="Fraser A."/>
            <person name="Gentles S."/>
            <person name="Goble A."/>
            <person name="Hamlin N."/>
            <person name="Harris D.E."/>
            <person name="Hidalgo J."/>
            <person name="Hodgson G."/>
            <person name="Holroyd S."/>
            <person name="Hornsby T."/>
            <person name="Howarth S."/>
            <person name="Huckle E.J."/>
            <person name="Hunt S."/>
            <person name="Jagels K."/>
            <person name="James K.D."/>
            <person name="Jones L."/>
            <person name="Jones M."/>
            <person name="Leather S."/>
            <person name="McDonald S."/>
            <person name="McLean J."/>
            <person name="Mooney P."/>
            <person name="Moule S."/>
            <person name="Mungall K.L."/>
            <person name="Murphy L.D."/>
            <person name="Niblett D."/>
            <person name="Odell C."/>
            <person name="Oliver K."/>
            <person name="O'Neil S."/>
            <person name="Pearson D."/>
            <person name="Quail M.A."/>
            <person name="Rabbinowitsch E."/>
            <person name="Rutherford K.M."/>
            <person name="Rutter S."/>
            <person name="Saunders D."/>
            <person name="Seeger K."/>
            <person name="Sharp S."/>
            <person name="Skelton J."/>
            <person name="Simmonds M.N."/>
            <person name="Squares R."/>
            <person name="Squares S."/>
            <person name="Stevens K."/>
            <person name="Taylor K."/>
            <person name="Taylor R.G."/>
            <person name="Tivey A."/>
            <person name="Walsh S.V."/>
            <person name="Warren T."/>
            <person name="Whitehead S."/>
            <person name="Woodward J.R."/>
            <person name="Volckaert G."/>
            <person name="Aert R."/>
            <person name="Robben J."/>
            <person name="Grymonprez B."/>
            <person name="Weltjens I."/>
            <person name="Vanstreels E."/>
            <person name="Rieger M."/>
            <person name="Schaefer M."/>
            <person name="Mueller-Auer S."/>
            <person name="Gabel C."/>
            <person name="Fuchs M."/>
            <person name="Duesterhoeft A."/>
            <person name="Fritzc C."/>
            <person name="Holzer E."/>
            <person name="Moestl D."/>
            <person name="Hilbert H."/>
            <person name="Borzym K."/>
            <person name="Langer I."/>
            <person name="Beck A."/>
            <person name="Lehrach H."/>
            <person name="Reinhardt R."/>
            <person name="Pohl T.M."/>
            <person name="Eger P."/>
            <person name="Zimmermann W."/>
            <person name="Wedler H."/>
            <person name="Wambutt R."/>
            <person name="Purnelle B."/>
            <person name="Goffeau A."/>
            <person name="Cadieu E."/>
            <person name="Dreano S."/>
            <person name="Gloux S."/>
            <person name="Lelaure V."/>
            <person name="Mottier S."/>
            <person name="Galibert F."/>
            <person name="Aves S.J."/>
            <person name="Xiang Z."/>
            <person name="Hunt C."/>
            <person name="Moore K."/>
            <person name="Hurst S.M."/>
            <person name="Lucas M."/>
            <person name="Rochet M."/>
            <person name="Gaillardin C."/>
            <person name="Tallada V.A."/>
            <person name="Garzon A."/>
            <person name="Thode G."/>
            <person name="Daga R.R."/>
            <person name="Cruzado L."/>
            <person name="Jimenez J."/>
            <person name="Sanchez M."/>
            <person name="del Rey F."/>
            <person name="Benito J."/>
            <person name="Dominguez A."/>
            <person name="Revuelta J.L."/>
            <person name="Moreno S."/>
            <person name="Armstrong J."/>
            <person name="Forsburg S.L."/>
            <person name="Cerutti L."/>
            <person name="Lowe T."/>
            <person name="McCombie W.R."/>
            <person name="Paulsen I."/>
            <person name="Potashkin J."/>
            <person name="Shpakovski G.V."/>
            <person name="Ussery D."/>
            <person name="Barrell B.G."/>
            <person name="Nurse P."/>
        </authorList>
    </citation>
    <scope>NUCLEOTIDE SEQUENCE [LARGE SCALE GENOMIC DNA]</scope>
    <source>
        <strain>972 / ATCC 24843</strain>
    </source>
</reference>
<reference key="2">
    <citation type="journal article" date="2011" name="Science">
        <title>Comparative functional genomics of the fission yeasts.</title>
        <authorList>
            <person name="Rhind N."/>
            <person name="Chen Z."/>
            <person name="Yassour M."/>
            <person name="Thompson D.A."/>
            <person name="Haas B.J."/>
            <person name="Habib N."/>
            <person name="Wapinski I."/>
            <person name="Roy S."/>
            <person name="Lin M.F."/>
            <person name="Heiman D.I."/>
            <person name="Young S.K."/>
            <person name="Furuya K."/>
            <person name="Guo Y."/>
            <person name="Pidoux A."/>
            <person name="Chen H.M."/>
            <person name="Robbertse B."/>
            <person name="Goldberg J.M."/>
            <person name="Aoki K."/>
            <person name="Bayne E.H."/>
            <person name="Berlin A.M."/>
            <person name="Desjardins C.A."/>
            <person name="Dobbs E."/>
            <person name="Dukaj L."/>
            <person name="Fan L."/>
            <person name="FitzGerald M.G."/>
            <person name="French C."/>
            <person name="Gujja S."/>
            <person name="Hansen K."/>
            <person name="Keifenheim D."/>
            <person name="Levin J.Z."/>
            <person name="Mosher R.A."/>
            <person name="Mueller C.A."/>
            <person name="Pfiffner J."/>
            <person name="Priest M."/>
            <person name="Russ C."/>
            <person name="Smialowska A."/>
            <person name="Swoboda P."/>
            <person name="Sykes S.M."/>
            <person name="Vaughn M."/>
            <person name="Vengrova S."/>
            <person name="Yoder R."/>
            <person name="Zeng Q."/>
            <person name="Allshire R."/>
            <person name="Baulcombe D."/>
            <person name="Birren B.W."/>
            <person name="Brown W."/>
            <person name="Ekwall K."/>
            <person name="Kellis M."/>
            <person name="Leatherwood J."/>
            <person name="Levin H."/>
            <person name="Margalit H."/>
            <person name="Martienssen R."/>
            <person name="Nieduszynski C.A."/>
            <person name="Spatafora J.W."/>
            <person name="Friedman N."/>
            <person name="Dalgaard J.Z."/>
            <person name="Baumann P."/>
            <person name="Niki H."/>
            <person name="Regev A."/>
            <person name="Nusbaum C."/>
        </authorList>
    </citation>
    <scope>IDENTIFICATION</scope>
</reference>
<organism>
    <name type="scientific">Schizosaccharomyces pombe (strain 972 / ATCC 24843)</name>
    <name type="common">Fission yeast</name>
    <dbReference type="NCBI Taxonomy" id="284812"/>
    <lineage>
        <taxon>Eukaryota</taxon>
        <taxon>Fungi</taxon>
        <taxon>Dikarya</taxon>
        <taxon>Ascomycota</taxon>
        <taxon>Taphrinomycotina</taxon>
        <taxon>Schizosaccharomycetes</taxon>
        <taxon>Schizosaccharomycetales</taxon>
        <taxon>Schizosaccharomycetaceae</taxon>
        <taxon>Schizosaccharomyces</taxon>
    </lineage>
</organism>
<keyword id="KW-1185">Reference proteome</keyword>
<protein>
    <recommendedName>
        <fullName>Putative uncharacterized protein C9G1.14</fullName>
    </recommendedName>
</protein>
<gene>
    <name type="ORF">SPAC9G1.14</name>
</gene>
<proteinExistence type="predicted"/>
<sequence>MNVVYIADLKLPEILHTVSTDFALQKKLFQGFRATALKALAFTIYQISISIQTSYPSDYCCSCWLLDTVRCVAILYAIHLS</sequence>
<accession>G2TRK6</accession>
<feature type="chain" id="PRO_0000416627" description="Putative uncharacterized protein C9G1.14">
    <location>
        <begin position="1"/>
        <end position="81"/>
    </location>
</feature>
<dbReference type="EMBL" id="CU329670">
    <property type="protein sequence ID" value="CCD31315.1"/>
    <property type="molecule type" value="Genomic_DNA"/>
</dbReference>
<dbReference type="RefSeq" id="XP_004001770.1">
    <property type="nucleotide sequence ID" value="XM_004001721.1"/>
</dbReference>
<dbReference type="PaxDb" id="4896-SPAC9G1.14.1"/>
<dbReference type="EnsemblFungi" id="SPAC9G1.14.1">
    <property type="protein sequence ID" value="SPAC9G1.14.1:pep"/>
    <property type="gene ID" value="SPAC9G1.14"/>
</dbReference>
<dbReference type="PomBase" id="SPAC9G1.14"/>
<dbReference type="VEuPathDB" id="FungiDB:SPAC9G1.14"/>
<dbReference type="HOGENOM" id="CLU_2575231_0_0_1"/>
<dbReference type="InParanoid" id="G2TRK6"/>
<dbReference type="PRO" id="PR:G2TRK6"/>
<dbReference type="Proteomes" id="UP000002485">
    <property type="component" value="Chromosome I"/>
</dbReference>